<proteinExistence type="inferred from homology"/>
<name>PYRG_STAAS</name>
<evidence type="ECO:0000255" key="1">
    <source>
        <dbReference type="HAMAP-Rule" id="MF_01227"/>
    </source>
</evidence>
<organism>
    <name type="scientific">Staphylococcus aureus (strain MSSA476)</name>
    <dbReference type="NCBI Taxonomy" id="282459"/>
    <lineage>
        <taxon>Bacteria</taxon>
        <taxon>Bacillati</taxon>
        <taxon>Bacillota</taxon>
        <taxon>Bacilli</taxon>
        <taxon>Bacillales</taxon>
        <taxon>Staphylococcaceae</taxon>
        <taxon>Staphylococcus</taxon>
    </lineage>
</organism>
<feature type="chain" id="PRO_0000138226" description="CTP synthase">
    <location>
        <begin position="1"/>
        <end position="536"/>
    </location>
</feature>
<feature type="domain" description="Glutamine amidotransferase type-1" evidence="1">
    <location>
        <begin position="293"/>
        <end position="535"/>
    </location>
</feature>
<feature type="region of interest" description="Amidoligase domain" evidence="1">
    <location>
        <begin position="1"/>
        <end position="267"/>
    </location>
</feature>
<feature type="active site" description="Nucleophile; for glutamine hydrolysis" evidence="1">
    <location>
        <position position="382"/>
    </location>
</feature>
<feature type="active site" evidence="1">
    <location>
        <position position="508"/>
    </location>
</feature>
<feature type="active site" evidence="1">
    <location>
        <position position="510"/>
    </location>
</feature>
<feature type="binding site" evidence="1">
    <location>
        <position position="13"/>
    </location>
    <ligand>
        <name>CTP</name>
        <dbReference type="ChEBI" id="CHEBI:37563"/>
        <note>allosteric inhibitor</note>
    </ligand>
</feature>
<feature type="binding site" evidence="1">
    <location>
        <position position="13"/>
    </location>
    <ligand>
        <name>UTP</name>
        <dbReference type="ChEBI" id="CHEBI:46398"/>
    </ligand>
</feature>
<feature type="binding site" evidence="1">
    <location>
        <begin position="14"/>
        <end position="19"/>
    </location>
    <ligand>
        <name>ATP</name>
        <dbReference type="ChEBI" id="CHEBI:30616"/>
    </ligand>
</feature>
<feature type="binding site" evidence="1">
    <location>
        <position position="54"/>
    </location>
    <ligand>
        <name>L-glutamine</name>
        <dbReference type="ChEBI" id="CHEBI:58359"/>
    </ligand>
</feature>
<feature type="binding site" evidence="1">
    <location>
        <position position="71"/>
    </location>
    <ligand>
        <name>ATP</name>
        <dbReference type="ChEBI" id="CHEBI:30616"/>
    </ligand>
</feature>
<feature type="binding site" evidence="1">
    <location>
        <position position="71"/>
    </location>
    <ligand>
        <name>Mg(2+)</name>
        <dbReference type="ChEBI" id="CHEBI:18420"/>
    </ligand>
</feature>
<feature type="binding site" evidence="1">
    <location>
        <position position="141"/>
    </location>
    <ligand>
        <name>Mg(2+)</name>
        <dbReference type="ChEBI" id="CHEBI:18420"/>
    </ligand>
</feature>
<feature type="binding site" evidence="1">
    <location>
        <begin position="148"/>
        <end position="150"/>
    </location>
    <ligand>
        <name>CTP</name>
        <dbReference type="ChEBI" id="CHEBI:37563"/>
        <note>allosteric inhibitor</note>
    </ligand>
</feature>
<feature type="binding site" evidence="1">
    <location>
        <begin position="188"/>
        <end position="193"/>
    </location>
    <ligand>
        <name>CTP</name>
        <dbReference type="ChEBI" id="CHEBI:37563"/>
        <note>allosteric inhibitor</note>
    </ligand>
</feature>
<feature type="binding site" evidence="1">
    <location>
        <begin position="188"/>
        <end position="193"/>
    </location>
    <ligand>
        <name>UTP</name>
        <dbReference type="ChEBI" id="CHEBI:46398"/>
    </ligand>
</feature>
<feature type="binding site" evidence="1">
    <location>
        <position position="224"/>
    </location>
    <ligand>
        <name>CTP</name>
        <dbReference type="ChEBI" id="CHEBI:37563"/>
        <note>allosteric inhibitor</note>
    </ligand>
</feature>
<feature type="binding site" evidence="1">
    <location>
        <position position="224"/>
    </location>
    <ligand>
        <name>UTP</name>
        <dbReference type="ChEBI" id="CHEBI:46398"/>
    </ligand>
</feature>
<feature type="binding site" evidence="1">
    <location>
        <begin position="240"/>
        <end position="242"/>
    </location>
    <ligand>
        <name>ATP</name>
        <dbReference type="ChEBI" id="CHEBI:30616"/>
    </ligand>
</feature>
<feature type="binding site" evidence="1">
    <location>
        <position position="355"/>
    </location>
    <ligand>
        <name>L-glutamine</name>
        <dbReference type="ChEBI" id="CHEBI:58359"/>
    </ligand>
</feature>
<feature type="binding site" evidence="1">
    <location>
        <begin position="383"/>
        <end position="386"/>
    </location>
    <ligand>
        <name>L-glutamine</name>
        <dbReference type="ChEBI" id="CHEBI:58359"/>
    </ligand>
</feature>
<feature type="binding site" evidence="1">
    <location>
        <position position="406"/>
    </location>
    <ligand>
        <name>L-glutamine</name>
        <dbReference type="ChEBI" id="CHEBI:58359"/>
    </ligand>
</feature>
<feature type="binding site" evidence="1">
    <location>
        <position position="463"/>
    </location>
    <ligand>
        <name>L-glutamine</name>
        <dbReference type="ChEBI" id="CHEBI:58359"/>
    </ligand>
</feature>
<gene>
    <name evidence="1" type="primary">pyrG</name>
    <name type="ordered locus">SAS2030</name>
</gene>
<keyword id="KW-0067">ATP-binding</keyword>
<keyword id="KW-0315">Glutamine amidotransferase</keyword>
<keyword id="KW-0436">Ligase</keyword>
<keyword id="KW-0460">Magnesium</keyword>
<keyword id="KW-0479">Metal-binding</keyword>
<keyword id="KW-0547">Nucleotide-binding</keyword>
<keyword id="KW-0665">Pyrimidine biosynthesis</keyword>
<reference key="1">
    <citation type="journal article" date="2004" name="Proc. Natl. Acad. Sci. U.S.A.">
        <title>Complete genomes of two clinical Staphylococcus aureus strains: evidence for the rapid evolution of virulence and drug resistance.</title>
        <authorList>
            <person name="Holden M.T.G."/>
            <person name="Feil E.J."/>
            <person name="Lindsay J.A."/>
            <person name="Peacock S.J."/>
            <person name="Day N.P.J."/>
            <person name="Enright M.C."/>
            <person name="Foster T.J."/>
            <person name="Moore C.E."/>
            <person name="Hurst L."/>
            <person name="Atkin R."/>
            <person name="Barron A."/>
            <person name="Bason N."/>
            <person name="Bentley S.D."/>
            <person name="Chillingworth C."/>
            <person name="Chillingworth T."/>
            <person name="Churcher C."/>
            <person name="Clark L."/>
            <person name="Corton C."/>
            <person name="Cronin A."/>
            <person name="Doggett J."/>
            <person name="Dowd L."/>
            <person name="Feltwell T."/>
            <person name="Hance Z."/>
            <person name="Harris B."/>
            <person name="Hauser H."/>
            <person name="Holroyd S."/>
            <person name="Jagels K."/>
            <person name="James K.D."/>
            <person name="Lennard N."/>
            <person name="Line A."/>
            <person name="Mayes R."/>
            <person name="Moule S."/>
            <person name="Mungall K."/>
            <person name="Ormond D."/>
            <person name="Quail M.A."/>
            <person name="Rabbinowitsch E."/>
            <person name="Rutherford K.M."/>
            <person name="Sanders M."/>
            <person name="Sharp S."/>
            <person name="Simmonds M."/>
            <person name="Stevens K."/>
            <person name="Whitehead S."/>
            <person name="Barrell B.G."/>
            <person name="Spratt B.G."/>
            <person name="Parkhill J."/>
        </authorList>
    </citation>
    <scope>NUCLEOTIDE SEQUENCE [LARGE SCALE GENOMIC DNA]</scope>
    <source>
        <strain>MSSA476</strain>
    </source>
</reference>
<protein>
    <recommendedName>
        <fullName evidence="1">CTP synthase</fullName>
        <ecNumber evidence="1">6.3.4.2</ecNumber>
    </recommendedName>
    <alternativeName>
        <fullName evidence="1">Cytidine 5'-triphosphate synthase</fullName>
    </alternativeName>
    <alternativeName>
        <fullName evidence="1">Cytidine triphosphate synthetase</fullName>
        <shortName evidence="1">CTP synthetase</shortName>
        <shortName evidence="1">CTPS</shortName>
    </alternativeName>
    <alternativeName>
        <fullName evidence="1">UTP--ammonia ligase</fullName>
    </alternativeName>
</protein>
<dbReference type="EC" id="6.3.4.2" evidence="1"/>
<dbReference type="EMBL" id="BX571857">
    <property type="protein sequence ID" value="CAG43838.1"/>
    <property type="molecule type" value="Genomic_DNA"/>
</dbReference>
<dbReference type="RefSeq" id="WP_000159960.1">
    <property type="nucleotide sequence ID" value="NC_002953.3"/>
</dbReference>
<dbReference type="SMR" id="Q6G7I3"/>
<dbReference type="MEROPS" id="C26.964"/>
<dbReference type="KEGG" id="sas:SAS2030"/>
<dbReference type="HOGENOM" id="CLU_011675_5_0_9"/>
<dbReference type="UniPathway" id="UPA00159">
    <property type="reaction ID" value="UER00277"/>
</dbReference>
<dbReference type="GO" id="GO:0005829">
    <property type="term" value="C:cytosol"/>
    <property type="evidence" value="ECO:0007669"/>
    <property type="project" value="TreeGrafter"/>
</dbReference>
<dbReference type="GO" id="GO:0005524">
    <property type="term" value="F:ATP binding"/>
    <property type="evidence" value="ECO:0007669"/>
    <property type="project" value="UniProtKB-KW"/>
</dbReference>
<dbReference type="GO" id="GO:0003883">
    <property type="term" value="F:CTP synthase activity"/>
    <property type="evidence" value="ECO:0007669"/>
    <property type="project" value="UniProtKB-UniRule"/>
</dbReference>
<dbReference type="GO" id="GO:0004359">
    <property type="term" value="F:glutaminase activity"/>
    <property type="evidence" value="ECO:0007669"/>
    <property type="project" value="RHEA"/>
</dbReference>
<dbReference type="GO" id="GO:0042802">
    <property type="term" value="F:identical protein binding"/>
    <property type="evidence" value="ECO:0007669"/>
    <property type="project" value="TreeGrafter"/>
</dbReference>
<dbReference type="GO" id="GO:0046872">
    <property type="term" value="F:metal ion binding"/>
    <property type="evidence" value="ECO:0007669"/>
    <property type="project" value="UniProtKB-KW"/>
</dbReference>
<dbReference type="GO" id="GO:0044210">
    <property type="term" value="P:'de novo' CTP biosynthetic process"/>
    <property type="evidence" value="ECO:0007669"/>
    <property type="project" value="UniProtKB-UniRule"/>
</dbReference>
<dbReference type="GO" id="GO:0019856">
    <property type="term" value="P:pyrimidine nucleobase biosynthetic process"/>
    <property type="evidence" value="ECO:0007669"/>
    <property type="project" value="TreeGrafter"/>
</dbReference>
<dbReference type="CDD" id="cd03113">
    <property type="entry name" value="CTPS_N"/>
    <property type="match status" value="1"/>
</dbReference>
<dbReference type="CDD" id="cd01746">
    <property type="entry name" value="GATase1_CTP_Synthase"/>
    <property type="match status" value="1"/>
</dbReference>
<dbReference type="FunFam" id="3.40.50.300:FF:000009">
    <property type="entry name" value="CTP synthase"/>
    <property type="match status" value="1"/>
</dbReference>
<dbReference type="FunFam" id="3.40.50.880:FF:000002">
    <property type="entry name" value="CTP synthase"/>
    <property type="match status" value="1"/>
</dbReference>
<dbReference type="Gene3D" id="3.40.50.880">
    <property type="match status" value="1"/>
</dbReference>
<dbReference type="Gene3D" id="3.40.50.300">
    <property type="entry name" value="P-loop containing nucleotide triphosphate hydrolases"/>
    <property type="match status" value="1"/>
</dbReference>
<dbReference type="HAMAP" id="MF_01227">
    <property type="entry name" value="PyrG"/>
    <property type="match status" value="1"/>
</dbReference>
<dbReference type="InterPro" id="IPR029062">
    <property type="entry name" value="Class_I_gatase-like"/>
</dbReference>
<dbReference type="InterPro" id="IPR004468">
    <property type="entry name" value="CTP_synthase"/>
</dbReference>
<dbReference type="InterPro" id="IPR017456">
    <property type="entry name" value="CTP_synthase_N"/>
</dbReference>
<dbReference type="InterPro" id="IPR017926">
    <property type="entry name" value="GATASE"/>
</dbReference>
<dbReference type="InterPro" id="IPR033828">
    <property type="entry name" value="GATase1_CTP_Synthase"/>
</dbReference>
<dbReference type="InterPro" id="IPR027417">
    <property type="entry name" value="P-loop_NTPase"/>
</dbReference>
<dbReference type="NCBIfam" id="NF003792">
    <property type="entry name" value="PRK05380.1"/>
    <property type="match status" value="1"/>
</dbReference>
<dbReference type="NCBIfam" id="TIGR00337">
    <property type="entry name" value="PyrG"/>
    <property type="match status" value="1"/>
</dbReference>
<dbReference type="PANTHER" id="PTHR11550">
    <property type="entry name" value="CTP SYNTHASE"/>
    <property type="match status" value="1"/>
</dbReference>
<dbReference type="PANTHER" id="PTHR11550:SF0">
    <property type="entry name" value="CTP SYNTHASE-RELATED"/>
    <property type="match status" value="1"/>
</dbReference>
<dbReference type="Pfam" id="PF06418">
    <property type="entry name" value="CTP_synth_N"/>
    <property type="match status" value="1"/>
</dbReference>
<dbReference type="Pfam" id="PF00117">
    <property type="entry name" value="GATase"/>
    <property type="match status" value="1"/>
</dbReference>
<dbReference type="SUPFAM" id="SSF52317">
    <property type="entry name" value="Class I glutamine amidotransferase-like"/>
    <property type="match status" value="1"/>
</dbReference>
<dbReference type="SUPFAM" id="SSF52540">
    <property type="entry name" value="P-loop containing nucleoside triphosphate hydrolases"/>
    <property type="match status" value="1"/>
</dbReference>
<dbReference type="PROSITE" id="PS51273">
    <property type="entry name" value="GATASE_TYPE_1"/>
    <property type="match status" value="1"/>
</dbReference>
<sequence>MTKFIFVTGGVVSSLGKGITASSLGRLLKDRGLNVTIQKFDPYLNVDPGTMSPYQHGEVFVTDDGAETDLDLGHYERFIDINLNKFSNVTAGKVYSHVLKKERRGDYLGGTVQVIPHITNEIKERLLLAGESTNADVVITEIGGTTGDIESLPFIEAIRQIRSDLGRENVMYVHCTLLPYIKAAGEMKTKPTQHSVKELRGLGIQPDLIVVRTEYEMTQDLKDKIALFCDINKESVIECRDADSLYEIPLQLSQQNMDDIVIKRLQLNAKYETQLDEWKQLLDIVNNLDGKITIGLVGKYVSLQDAYLSVVESLKHAGYPFAKDIDIRWIDSSEVTDENAAEYLADVDGILVPGGFGFRASEGKISAIKYARENNVPFFGICLGMQLATVEFSRNVLGLEGAHSAELDPATPYPIIDLLPEQKDIEDLGGTLRLGLYPCSIKEGTLAQDVYGKAEIEERHRHRYEFNNDYREQLEANGMVISGTSPDGRLVEMVEIPTNDFFIACQFHPEFLSRPNRPHPIFKSFIEASLKYQQNK</sequence>
<comment type="function">
    <text evidence="1">Catalyzes the ATP-dependent amination of UTP to CTP with either L-glutamine or ammonia as the source of nitrogen. Regulates intracellular CTP levels through interactions with the four ribonucleotide triphosphates.</text>
</comment>
<comment type="catalytic activity">
    <reaction evidence="1">
        <text>UTP + L-glutamine + ATP + H2O = CTP + L-glutamate + ADP + phosphate + 2 H(+)</text>
        <dbReference type="Rhea" id="RHEA:26426"/>
        <dbReference type="ChEBI" id="CHEBI:15377"/>
        <dbReference type="ChEBI" id="CHEBI:15378"/>
        <dbReference type="ChEBI" id="CHEBI:29985"/>
        <dbReference type="ChEBI" id="CHEBI:30616"/>
        <dbReference type="ChEBI" id="CHEBI:37563"/>
        <dbReference type="ChEBI" id="CHEBI:43474"/>
        <dbReference type="ChEBI" id="CHEBI:46398"/>
        <dbReference type="ChEBI" id="CHEBI:58359"/>
        <dbReference type="ChEBI" id="CHEBI:456216"/>
        <dbReference type="EC" id="6.3.4.2"/>
    </reaction>
</comment>
<comment type="catalytic activity">
    <reaction evidence="1">
        <text>L-glutamine + H2O = L-glutamate + NH4(+)</text>
        <dbReference type="Rhea" id="RHEA:15889"/>
        <dbReference type="ChEBI" id="CHEBI:15377"/>
        <dbReference type="ChEBI" id="CHEBI:28938"/>
        <dbReference type="ChEBI" id="CHEBI:29985"/>
        <dbReference type="ChEBI" id="CHEBI:58359"/>
    </reaction>
</comment>
<comment type="catalytic activity">
    <reaction evidence="1">
        <text>UTP + NH4(+) + ATP = CTP + ADP + phosphate + 2 H(+)</text>
        <dbReference type="Rhea" id="RHEA:16597"/>
        <dbReference type="ChEBI" id="CHEBI:15378"/>
        <dbReference type="ChEBI" id="CHEBI:28938"/>
        <dbReference type="ChEBI" id="CHEBI:30616"/>
        <dbReference type="ChEBI" id="CHEBI:37563"/>
        <dbReference type="ChEBI" id="CHEBI:43474"/>
        <dbReference type="ChEBI" id="CHEBI:46398"/>
        <dbReference type="ChEBI" id="CHEBI:456216"/>
    </reaction>
</comment>
<comment type="activity regulation">
    <text evidence="1">Allosterically activated by GTP, when glutamine is the substrate; GTP has no effect on the reaction when ammonia is the substrate. The allosteric effector GTP functions by stabilizing the protein conformation that binds the tetrahedral intermediate(s) formed during glutamine hydrolysis. Inhibited by the product CTP, via allosteric rather than competitive inhibition.</text>
</comment>
<comment type="pathway">
    <text evidence="1">Pyrimidine metabolism; CTP biosynthesis via de novo pathway; CTP from UDP: step 2/2.</text>
</comment>
<comment type="subunit">
    <text evidence="1">Homotetramer.</text>
</comment>
<comment type="miscellaneous">
    <text evidence="1">CTPSs have evolved a hybrid strategy for distinguishing between UTP and CTP. The overlapping regions of the product feedback inhibitory and substrate sites recognize a common feature in both compounds, the triphosphate moiety. To differentiate isosteric substrate and product pyrimidine rings, an additional pocket far from the expected kinase/ligase catalytic site, specifically recognizes the cytosine and ribose portions of the product inhibitor.</text>
</comment>
<comment type="similarity">
    <text evidence="1">Belongs to the CTP synthase family.</text>
</comment>
<accession>Q6G7I3</accession>